<sequence>MGDEFRPSHEERSKMYKSNVRDQNEMRRKRREDEVQIRKNRRDEKFERNRQITVQRSLSHEETSELLKSVADGLQSMQETTIHEALTVLHENLNNTVWTIHVLVKVQILHKLSDVYCNRVISQTTRLLISRTLLKISGIDEVKYERYSSDDRCIQSLVFNISTYGSSEDILCDTFQSIACFIIRSITYRNLALDCAIVSELIDASTINMSIILHRSLMWLVFLFCEKLDRCSPHVDEIAPLLEIISNGIQSTDAMVQTDAASSCASLAEWPPIYHYMSDLKLCSKLVANLRNDKGNARPKVKAGINSIIQATGYFTEEMIDAGLLEVLKGFVNVSYMSQEVCFIISNICVEGEQTIDKLISSGVLREVARVMEASEYRSRREAAFVICHCCASANQKHLEYVVELGMLSAFTDLLTCMDVSLVSYILDAIYLLLQFGEMRLLPDNSNPVAIKLEEIGCREKLEFLCESQSVDIHARAYTIIDRFYVDDDAPLNDDPFAGYQRNNIDDTIEKMIREPIMDQPFSF</sequence>
<dbReference type="EMBL" id="AF040997">
    <property type="protein sequence ID" value="AAB97173.1"/>
    <property type="molecule type" value="mRNA"/>
</dbReference>
<dbReference type="EMBL" id="Z74043">
    <property type="protein sequence ID" value="CAA98540.1"/>
    <property type="molecule type" value="Genomic_DNA"/>
</dbReference>
<dbReference type="PIR" id="T24976">
    <property type="entry name" value="T24976"/>
</dbReference>
<dbReference type="PIR" id="T42404">
    <property type="entry name" value="T42404"/>
</dbReference>
<dbReference type="RefSeq" id="NP_001379139.1">
    <property type="nucleotide sequence ID" value="NM_001392611.1"/>
</dbReference>
<dbReference type="RefSeq" id="NP_505854.1">
    <property type="nucleotide sequence ID" value="NM_073453.6"/>
</dbReference>
<dbReference type="SMR" id="Q22560"/>
<dbReference type="BioGRID" id="44582">
    <property type="interactions" value="2"/>
</dbReference>
<dbReference type="FunCoup" id="Q22560">
    <property type="interactions" value="278"/>
</dbReference>
<dbReference type="IntAct" id="Q22560">
    <property type="interactions" value="1"/>
</dbReference>
<dbReference type="STRING" id="6239.T19B10.7.2"/>
<dbReference type="iPTMnet" id="Q22560"/>
<dbReference type="PaxDb" id="6239-T19B10.7.2"/>
<dbReference type="PeptideAtlas" id="Q22560"/>
<dbReference type="EnsemblMetazoa" id="T19B10.7.1">
    <property type="protein sequence ID" value="T19B10.7.1"/>
    <property type="gene ID" value="WBGene00002072"/>
</dbReference>
<dbReference type="EnsemblMetazoa" id="T19B10.7.2">
    <property type="protein sequence ID" value="T19B10.7.2"/>
    <property type="gene ID" value="WBGene00002072"/>
</dbReference>
<dbReference type="GeneID" id="179555"/>
<dbReference type="UCSC" id="T19B10.7.2">
    <property type="organism name" value="c. elegans"/>
</dbReference>
<dbReference type="AGR" id="WB:WBGene00002072"/>
<dbReference type="WormBase" id="T19B10.7">
    <property type="protein sequence ID" value="CE06461"/>
    <property type="gene ID" value="WBGene00002072"/>
    <property type="gene designation" value="ima-1"/>
</dbReference>
<dbReference type="eggNOG" id="KOG0166">
    <property type="taxonomic scope" value="Eukaryota"/>
</dbReference>
<dbReference type="GeneTree" id="ENSGT01050000244891"/>
<dbReference type="HOGENOM" id="CLU_611424_0_0_1"/>
<dbReference type="InParanoid" id="Q22560"/>
<dbReference type="OMA" id="AFVICHC"/>
<dbReference type="OrthoDB" id="5823958at2759"/>
<dbReference type="PhylomeDB" id="Q22560"/>
<dbReference type="SignaLink" id="Q22560"/>
<dbReference type="PRO" id="PR:Q22560"/>
<dbReference type="Proteomes" id="UP000001940">
    <property type="component" value="Chromosome V"/>
</dbReference>
<dbReference type="Bgee" id="WBGene00002072">
    <property type="expression patterns" value="Expressed in germ line (C elegans) and 4 other cell types or tissues"/>
</dbReference>
<dbReference type="GO" id="GO:0005737">
    <property type="term" value="C:cytoplasm"/>
    <property type="evidence" value="ECO:0000314"/>
    <property type="project" value="UniProtKB"/>
</dbReference>
<dbReference type="GO" id="GO:0005643">
    <property type="term" value="C:nuclear pore"/>
    <property type="evidence" value="ECO:0000315"/>
    <property type="project" value="UniProtKB"/>
</dbReference>
<dbReference type="GO" id="GO:0005654">
    <property type="term" value="C:nucleoplasm"/>
    <property type="evidence" value="ECO:0000314"/>
    <property type="project" value="WormBase"/>
</dbReference>
<dbReference type="GO" id="GO:0005634">
    <property type="term" value="C:nucleus"/>
    <property type="evidence" value="ECO:0000318"/>
    <property type="project" value="GO_Central"/>
</dbReference>
<dbReference type="GO" id="GO:0061608">
    <property type="term" value="F:nuclear import signal receptor activity"/>
    <property type="evidence" value="ECO:0000315"/>
    <property type="project" value="UniProtKB"/>
</dbReference>
<dbReference type="GO" id="GO:0008139">
    <property type="term" value="F:nuclear localization sequence binding"/>
    <property type="evidence" value="ECO:0000318"/>
    <property type="project" value="GO_Central"/>
</dbReference>
<dbReference type="GO" id="GO:0006607">
    <property type="term" value="P:NLS-bearing protein import into nucleus"/>
    <property type="evidence" value="ECO:0000318"/>
    <property type="project" value="GO_Central"/>
</dbReference>
<dbReference type="GO" id="GO:0006606">
    <property type="term" value="P:protein import into nucleus"/>
    <property type="evidence" value="ECO:0000315"/>
    <property type="project" value="UniProtKB"/>
</dbReference>
<dbReference type="FunFam" id="1.25.10.10:FF:001286">
    <property type="entry name" value="Importin subunit alpha-1"/>
    <property type="match status" value="1"/>
</dbReference>
<dbReference type="Gene3D" id="1.25.10.10">
    <property type="entry name" value="Leucine-rich Repeat Variant"/>
    <property type="match status" value="1"/>
</dbReference>
<dbReference type="InterPro" id="IPR011989">
    <property type="entry name" value="ARM-like"/>
</dbReference>
<dbReference type="InterPro" id="IPR016024">
    <property type="entry name" value="ARM-type_fold"/>
</dbReference>
<dbReference type="InterPro" id="IPR032413">
    <property type="entry name" value="Arm_3"/>
</dbReference>
<dbReference type="InterPro" id="IPR002652">
    <property type="entry name" value="Importin-a_IBB"/>
</dbReference>
<dbReference type="PANTHER" id="PTHR23316">
    <property type="entry name" value="IMPORTIN ALPHA"/>
    <property type="match status" value="1"/>
</dbReference>
<dbReference type="Pfam" id="PF16186">
    <property type="entry name" value="Arm_3"/>
    <property type="match status" value="1"/>
</dbReference>
<dbReference type="Pfam" id="PF01749">
    <property type="entry name" value="IBB"/>
    <property type="match status" value="1"/>
</dbReference>
<dbReference type="SUPFAM" id="SSF48371">
    <property type="entry name" value="ARM repeat"/>
    <property type="match status" value="1"/>
</dbReference>
<dbReference type="PROSITE" id="PS51214">
    <property type="entry name" value="IBB"/>
    <property type="match status" value="1"/>
</dbReference>
<keyword id="KW-0963">Cytoplasm</keyword>
<keyword id="KW-0653">Protein transport</keyword>
<keyword id="KW-1185">Reference proteome</keyword>
<keyword id="KW-0813">Transport</keyword>
<organism evidence="6">
    <name type="scientific">Caenorhabditis elegans</name>
    <dbReference type="NCBI Taxonomy" id="6239"/>
    <lineage>
        <taxon>Eukaryota</taxon>
        <taxon>Metazoa</taxon>
        <taxon>Ecdysozoa</taxon>
        <taxon>Nematoda</taxon>
        <taxon>Chromadorea</taxon>
        <taxon>Rhabditida</taxon>
        <taxon>Rhabditina</taxon>
        <taxon>Rhabditomorpha</taxon>
        <taxon>Rhabditoidea</taxon>
        <taxon>Rhabditidae</taxon>
        <taxon>Peloderinae</taxon>
        <taxon>Caenorhabditis</taxon>
    </lineage>
</organism>
<feature type="chain" id="PRO_0000120734" description="Importin subunit alpha-1">
    <location>
        <begin position="1"/>
        <end position="524"/>
    </location>
</feature>
<feature type="domain" description="IBB" evidence="2">
    <location>
        <begin position="1"/>
        <end position="59"/>
    </location>
</feature>
<feature type="region of interest" description="Disordered" evidence="3">
    <location>
        <begin position="1"/>
        <end position="42"/>
    </location>
</feature>
<feature type="sequence conflict" description="In Ref. 1; AAB97173." evidence="5" ref="1">
    <original>H</original>
    <variation>Q</variation>
    <location>
        <position position="83"/>
    </location>
</feature>
<proteinExistence type="evidence at protein level"/>
<reference evidence="5" key="1">
    <citation type="journal article" date="2001" name="Development">
        <title>Germline and developmental roles of the nuclear transport factor importin alpha3 in C. elegans.</title>
        <authorList>
            <person name="Geles K.G."/>
            <person name="Adam S.A."/>
        </authorList>
    </citation>
    <scope>NUCLEOTIDE SEQUENCE [MRNA]</scope>
    <scope>SUBUNIT</scope>
    <scope>SUBCELLULAR LOCATION</scope>
    <scope>TISSUE SPECIFICITY</scope>
    <scope>DEVELOPMENTAL STAGE</scope>
</reference>
<reference key="2">
    <citation type="journal article" date="1998" name="Science">
        <title>Genome sequence of the nematode C. elegans: a platform for investigating biology.</title>
        <authorList>
            <consortium name="The C. elegans sequencing consortium"/>
        </authorList>
    </citation>
    <scope>NUCLEOTIDE SEQUENCE [LARGE SCALE GENOMIC DNA]</scope>
    <source>
        <strain>Bristol N2</strain>
    </source>
</reference>
<gene>
    <name type="primary">ima-1</name>
    <name type="ORF">T19B10.7</name>
</gene>
<evidence type="ECO:0000250" key="1">
    <source>
        <dbReference type="UniProtKB" id="Q19969"/>
    </source>
</evidence>
<evidence type="ECO:0000255" key="2">
    <source>
        <dbReference type="PROSITE-ProRule" id="PRU00561"/>
    </source>
</evidence>
<evidence type="ECO:0000256" key="3">
    <source>
        <dbReference type="SAM" id="MobiDB-lite"/>
    </source>
</evidence>
<evidence type="ECO:0000269" key="4">
    <source>
    </source>
</evidence>
<evidence type="ECO:0000305" key="5"/>
<evidence type="ECO:0000312" key="6">
    <source>
        <dbReference type="EMBL" id="CAA98540.1"/>
    </source>
</evidence>
<accession>Q22560</accession>
<accession>O44926</accession>
<comment type="function">
    <text evidence="1">Binds specifically and directly to substrates containing either a simple or bipartite NLS motif. Promotes docking of import substrates to the nuclear envelope. Seems to act as a cytosolic receptor for both simple and bipartite NLS motifs (By similarity).</text>
</comment>
<comment type="subunit">
    <text evidence="4">Forms a complex with an importin beta subunit.</text>
</comment>
<comment type="subcellular location">
    <subcellularLocation>
        <location evidence="4">Cytoplasm</location>
    </subcellularLocation>
</comment>
<comment type="tissue specificity">
    <text evidence="4">Adult germline tissues.</text>
</comment>
<comment type="developmental stage">
    <text evidence="4">Expressed very weakly in early larvae, levels of expression increase in L4 and adult stages when germ cells are continually proliferating.</text>
</comment>
<comment type="domain">
    <text>Does not contain ARM repeats, but instead Ser charged repeats. May have specificity for cargos distinct from that of other importin alpha subunits.</text>
</comment>
<comment type="similarity">
    <text evidence="5">Belongs to the importin alpha family.</text>
</comment>
<protein>
    <recommendedName>
        <fullName>Importin subunit alpha-1</fullName>
    </recommendedName>
    <alternativeName>
        <fullName>Karyopherin subunit alpha-1</fullName>
    </alternativeName>
</protein>
<name>IMA1_CAEEL</name>